<proteinExistence type="evidence at protein level"/>
<organism>
    <name type="scientific">Mus musculus</name>
    <name type="common">Mouse</name>
    <dbReference type="NCBI Taxonomy" id="10090"/>
    <lineage>
        <taxon>Eukaryota</taxon>
        <taxon>Metazoa</taxon>
        <taxon>Chordata</taxon>
        <taxon>Craniata</taxon>
        <taxon>Vertebrata</taxon>
        <taxon>Euteleostomi</taxon>
        <taxon>Mammalia</taxon>
        <taxon>Eutheria</taxon>
        <taxon>Euarchontoglires</taxon>
        <taxon>Glires</taxon>
        <taxon>Rodentia</taxon>
        <taxon>Myomorpha</taxon>
        <taxon>Muroidea</taxon>
        <taxon>Muridae</taxon>
        <taxon>Murinae</taxon>
        <taxon>Mus</taxon>
        <taxon>Mus</taxon>
    </lineage>
</organism>
<gene>
    <name type="primary">Kctd19</name>
</gene>
<sequence length="927" mass="104820">MEEPGGLHESAEDLFHFNVGGWHFSVPRSKLAQFPDSLLWKEASALTSSENQRLFIDRDGSTFRHVHYYLYTSKLSFSSCAELNLLYEQALGLQLMPLLQTLDNLKEGRHHLRVRPADIPVAERASLNYWRTWKCISKPSDFPIKSPAFTGLHDKAPLGLMDTPLLDTEEEVHYCFLPLDLVAKYPSLVTEDNLLWLAETVALIECECSEFRFIVNFLRSHKILLPDNFSNIDVLEAEVEILEIPELTEAVRLYRMNMGGCSRTSCPPLSPGKGGRTASVESVKPLYLMALGLLVKYPDSALGQLRIESTLDGSRLYITGNGALFQHVRNWLGTCRLPLTETISEVYELCAFLDKRDITYEPMKVALKTHLEPRTLLPVDVLSEEWTAEVTIYSPQQIIKLYVGSHWYATTLQTLMKYPELLSNTQRVYWIAYGQTLLIHGDGQMFRHILNFLRLGKLFLPSEFKEWPLFCQEVEEYHIPALSEALAQCEAYKSWTQEKESENEEAFPIRKLHVVTEGTGPMAEFSRDAKETTACMPVDFQECSDRTPWNKAKGNLTRSSQMEEAEQYTRTIQVSLCRNAKRGGNPSTYSHCSGLCANPRHWGGHSESPPKKKCTTINLTQKPDAKDPPVTPMQKLISLVREWDMVNCKQWEFQPLPASRSSSVEEASLHVPSGSEAAPQPGTSAAWKAHSITSEKDAGPQTGPGAGVKDKGPEPTFKPYFPTKRAITLKDWGKQRPKDRESPAPEQPLPNANGTDNPGAILKVAHPPVVGNDGSCMFFEDSIIYTTQMDNIKHTSLTASPQLREVTFLSFSLSWEEMFYAQKCHRFLTDIILDSIRQKDPKAITAKVVSLAYRLWTLNISPKQFVVDLLAIAGFKDDRHTQERLYSWVELTLPFARKYGRCVDLLIQRGLSRSVSYSVLGKYLHEG</sequence>
<name>KCD19_MOUSE</name>
<reference key="1">
    <citation type="journal article" date="2005" name="Science">
        <title>The transcriptional landscape of the mammalian genome.</title>
        <authorList>
            <person name="Carninci P."/>
            <person name="Kasukawa T."/>
            <person name="Katayama S."/>
            <person name="Gough J."/>
            <person name="Frith M.C."/>
            <person name="Maeda N."/>
            <person name="Oyama R."/>
            <person name="Ravasi T."/>
            <person name="Lenhard B."/>
            <person name="Wells C."/>
            <person name="Kodzius R."/>
            <person name="Shimokawa K."/>
            <person name="Bajic V.B."/>
            <person name="Brenner S.E."/>
            <person name="Batalov S."/>
            <person name="Forrest A.R."/>
            <person name="Zavolan M."/>
            <person name="Davis M.J."/>
            <person name="Wilming L.G."/>
            <person name="Aidinis V."/>
            <person name="Allen J.E."/>
            <person name="Ambesi-Impiombato A."/>
            <person name="Apweiler R."/>
            <person name="Aturaliya R.N."/>
            <person name="Bailey T.L."/>
            <person name="Bansal M."/>
            <person name="Baxter L."/>
            <person name="Beisel K.W."/>
            <person name="Bersano T."/>
            <person name="Bono H."/>
            <person name="Chalk A.M."/>
            <person name="Chiu K.P."/>
            <person name="Choudhary V."/>
            <person name="Christoffels A."/>
            <person name="Clutterbuck D.R."/>
            <person name="Crowe M.L."/>
            <person name="Dalla E."/>
            <person name="Dalrymple B.P."/>
            <person name="de Bono B."/>
            <person name="Della Gatta G."/>
            <person name="di Bernardo D."/>
            <person name="Down T."/>
            <person name="Engstrom P."/>
            <person name="Fagiolini M."/>
            <person name="Faulkner G."/>
            <person name="Fletcher C.F."/>
            <person name="Fukushima T."/>
            <person name="Furuno M."/>
            <person name="Futaki S."/>
            <person name="Gariboldi M."/>
            <person name="Georgii-Hemming P."/>
            <person name="Gingeras T.R."/>
            <person name="Gojobori T."/>
            <person name="Green R.E."/>
            <person name="Gustincich S."/>
            <person name="Harbers M."/>
            <person name="Hayashi Y."/>
            <person name="Hensch T.K."/>
            <person name="Hirokawa N."/>
            <person name="Hill D."/>
            <person name="Huminiecki L."/>
            <person name="Iacono M."/>
            <person name="Ikeo K."/>
            <person name="Iwama A."/>
            <person name="Ishikawa T."/>
            <person name="Jakt M."/>
            <person name="Kanapin A."/>
            <person name="Katoh M."/>
            <person name="Kawasawa Y."/>
            <person name="Kelso J."/>
            <person name="Kitamura H."/>
            <person name="Kitano H."/>
            <person name="Kollias G."/>
            <person name="Krishnan S.P."/>
            <person name="Kruger A."/>
            <person name="Kummerfeld S.K."/>
            <person name="Kurochkin I.V."/>
            <person name="Lareau L.F."/>
            <person name="Lazarevic D."/>
            <person name="Lipovich L."/>
            <person name="Liu J."/>
            <person name="Liuni S."/>
            <person name="McWilliam S."/>
            <person name="Madan Babu M."/>
            <person name="Madera M."/>
            <person name="Marchionni L."/>
            <person name="Matsuda H."/>
            <person name="Matsuzawa S."/>
            <person name="Miki H."/>
            <person name="Mignone F."/>
            <person name="Miyake S."/>
            <person name="Morris K."/>
            <person name="Mottagui-Tabar S."/>
            <person name="Mulder N."/>
            <person name="Nakano N."/>
            <person name="Nakauchi H."/>
            <person name="Ng P."/>
            <person name="Nilsson R."/>
            <person name="Nishiguchi S."/>
            <person name="Nishikawa S."/>
            <person name="Nori F."/>
            <person name="Ohara O."/>
            <person name="Okazaki Y."/>
            <person name="Orlando V."/>
            <person name="Pang K.C."/>
            <person name="Pavan W.J."/>
            <person name="Pavesi G."/>
            <person name="Pesole G."/>
            <person name="Petrovsky N."/>
            <person name="Piazza S."/>
            <person name="Reed J."/>
            <person name="Reid J.F."/>
            <person name="Ring B.Z."/>
            <person name="Ringwald M."/>
            <person name="Rost B."/>
            <person name="Ruan Y."/>
            <person name="Salzberg S.L."/>
            <person name="Sandelin A."/>
            <person name="Schneider C."/>
            <person name="Schoenbach C."/>
            <person name="Sekiguchi K."/>
            <person name="Semple C.A."/>
            <person name="Seno S."/>
            <person name="Sessa L."/>
            <person name="Sheng Y."/>
            <person name="Shibata Y."/>
            <person name="Shimada H."/>
            <person name="Shimada K."/>
            <person name="Silva D."/>
            <person name="Sinclair B."/>
            <person name="Sperling S."/>
            <person name="Stupka E."/>
            <person name="Sugiura K."/>
            <person name="Sultana R."/>
            <person name="Takenaka Y."/>
            <person name="Taki K."/>
            <person name="Tammoja K."/>
            <person name="Tan S.L."/>
            <person name="Tang S."/>
            <person name="Taylor M.S."/>
            <person name="Tegner J."/>
            <person name="Teichmann S.A."/>
            <person name="Ueda H.R."/>
            <person name="van Nimwegen E."/>
            <person name="Verardo R."/>
            <person name="Wei C.L."/>
            <person name="Yagi K."/>
            <person name="Yamanishi H."/>
            <person name="Zabarovsky E."/>
            <person name="Zhu S."/>
            <person name="Zimmer A."/>
            <person name="Hide W."/>
            <person name="Bult C."/>
            <person name="Grimmond S.M."/>
            <person name="Teasdale R.D."/>
            <person name="Liu E.T."/>
            <person name="Brusic V."/>
            <person name="Quackenbush J."/>
            <person name="Wahlestedt C."/>
            <person name="Mattick J.S."/>
            <person name="Hume D.A."/>
            <person name="Kai C."/>
            <person name="Sasaki D."/>
            <person name="Tomaru Y."/>
            <person name="Fukuda S."/>
            <person name="Kanamori-Katayama M."/>
            <person name="Suzuki M."/>
            <person name="Aoki J."/>
            <person name="Arakawa T."/>
            <person name="Iida J."/>
            <person name="Imamura K."/>
            <person name="Itoh M."/>
            <person name="Kato T."/>
            <person name="Kawaji H."/>
            <person name="Kawagashira N."/>
            <person name="Kawashima T."/>
            <person name="Kojima M."/>
            <person name="Kondo S."/>
            <person name="Konno H."/>
            <person name="Nakano K."/>
            <person name="Ninomiya N."/>
            <person name="Nishio T."/>
            <person name="Okada M."/>
            <person name="Plessy C."/>
            <person name="Shibata K."/>
            <person name="Shiraki T."/>
            <person name="Suzuki S."/>
            <person name="Tagami M."/>
            <person name="Waki K."/>
            <person name="Watahiki A."/>
            <person name="Okamura-Oho Y."/>
            <person name="Suzuki H."/>
            <person name="Kawai J."/>
            <person name="Hayashizaki Y."/>
        </authorList>
    </citation>
    <scope>NUCLEOTIDE SEQUENCE [LARGE SCALE MRNA] (ISOFORM 2)</scope>
    <source>
        <strain>C57BL/6J</strain>
        <tissue>Testis</tissue>
    </source>
</reference>
<reference key="2">
    <citation type="journal article" date="2004" name="Genome Res.">
        <title>The status, quality, and expansion of the NIH full-length cDNA project: the Mammalian Gene Collection (MGC).</title>
        <authorList>
            <consortium name="The MGC Project Team"/>
        </authorList>
    </citation>
    <scope>NUCLEOTIDE SEQUENCE [LARGE SCALE MRNA] (ISOFORMS 1 AND 2)</scope>
    <source>
        <tissue>Testis</tissue>
    </source>
</reference>
<reference key="3">
    <citation type="journal article" date="2008" name="J. Biol. Chem.">
        <title>A novel germ cell-specific protein, SHIP1, forms a complex with chromatin remodeling activity during spermatogenesis.</title>
        <authorList>
            <person name="Choi E."/>
            <person name="Han C."/>
            <person name="Park I."/>
            <person name="Lee B."/>
            <person name="Jin S."/>
            <person name="Choi H."/>
            <person name="Kim do H."/>
            <person name="Park Z.Y."/>
            <person name="Eddy E.M."/>
            <person name="Cho C."/>
        </authorList>
    </citation>
    <scope>IDENTIFICATION IN A COMPLEX WITH ZNF541; HDAC1 AND HSPA2</scope>
    <scope>IDENTIFICATION BY MASS SPECTROMETRY</scope>
    <scope>DEVELOPMENTAL STAGE</scope>
    <scope>TISSUE SPECIFICITY</scope>
</reference>
<reference key="4">
    <citation type="journal article" date="2010" name="Cell">
        <title>A tissue-specific atlas of mouse protein phosphorylation and expression.</title>
        <authorList>
            <person name="Huttlin E.L."/>
            <person name="Jedrychowski M.P."/>
            <person name="Elias J.E."/>
            <person name="Goswami T."/>
            <person name="Rad R."/>
            <person name="Beausoleil S.A."/>
            <person name="Villen J."/>
            <person name="Haas W."/>
            <person name="Sowa M.E."/>
            <person name="Gygi S.P."/>
        </authorList>
    </citation>
    <scope>PHOSPHORYLATION [LARGE SCALE ANALYSIS] AT SER-270</scope>
    <scope>IDENTIFICATION BY MASS SPECTROMETRY [LARGE SCALE ANALYSIS]</scope>
    <source>
        <tissue>Testis</tissue>
    </source>
</reference>
<reference key="5">
    <citation type="journal article" date="2021" name="Nat. Commun.">
        <title>Meiosis-specific ZFP541 repressor complex promotes developmental progression of meiotic prophase towards completion during mouse spermatogenesis.</title>
        <authorList>
            <person name="Horisawa-Takada Y."/>
            <person name="Kodera C."/>
            <person name="Takemoto K."/>
            <person name="Sakashita A."/>
            <person name="Horisawa K."/>
            <person name="Maeda R."/>
            <person name="Shimada R."/>
            <person name="Usuki S."/>
            <person name="Fujimura S."/>
            <person name="Tani N."/>
            <person name="Matsuura K."/>
            <person name="Akiyama T."/>
            <person name="Suzuki A."/>
            <person name="Niwa H."/>
            <person name="Tachibana M."/>
            <person name="Ohba T."/>
            <person name="Katabuchi H."/>
            <person name="Namekawa S.H."/>
            <person name="Araki K."/>
            <person name="Ishiguro K.I."/>
        </authorList>
    </citation>
    <scope>FUNCTION</scope>
    <scope>SUBCELLULAR LOCATION</scope>
    <scope>DISRUPTION PHENOTYPE</scope>
    <scope>TISSUE SPECIFICITY</scope>
    <scope>IDENTIFICATION IN A COMPLEX WITH HDAC1; HDAC2; DNTTIP1 AND ZNF541</scope>
</reference>
<reference key="6">
    <citation type="journal article" date="2021" name="PLoS Genet.">
        <title>KCTD19 and its associated protein ZFP541 are independently essential for meiosis in male mice.</title>
        <authorList>
            <person name="Oura S."/>
            <person name="Koyano T."/>
            <person name="Kodera C."/>
            <person name="Horisawa-Takada Y."/>
            <person name="Matsuyama M."/>
            <person name="Ishiguro K.I."/>
            <person name="Ikawa M."/>
        </authorList>
    </citation>
    <scope>FUNCTION</scope>
    <scope>SUBCELLULAR LOCATION</scope>
    <scope>TISSUE SPECIFICITY</scope>
    <scope>DISRUPTION PHENOTYPE</scope>
    <scope>IDENTIFICATION IN A COMPLEX WITH ZNF541 AND HDAC1</scope>
</reference>
<reference key="7">
    <citation type="journal article" date="2022" name="J. Genet. Genomics">
        <title>The ZFP541-KCTD19 complex is essential for pachytene progression by activating meiotic genes during mouse spermatogenesis.</title>
        <authorList>
            <person name="Li Y."/>
            <person name="Meng R."/>
            <person name="Li S."/>
            <person name="Gu B."/>
            <person name="Xu X."/>
            <person name="Zhang H."/>
            <person name="Tan X."/>
            <person name="Shao T."/>
            <person name="Wang J."/>
            <person name="Xu D."/>
            <person name="Wang F."/>
        </authorList>
    </citation>
    <scope>FUNCTION</scope>
    <scope>DISRUPTION PHENOTYPE</scope>
    <scope>SUBCELLULAR LOCATION</scope>
    <scope>TISSUE SPECIFICITY</scope>
    <scope>IDENTIFICATION IN A COMPLEX WITH HDAC1; HDAC2; DNTTIP1 AND ZNF541</scope>
</reference>
<dbReference type="EMBL" id="AK076644">
    <property type="protein sequence ID" value="BAC36433.1"/>
    <property type="molecule type" value="mRNA"/>
</dbReference>
<dbReference type="EMBL" id="BC092530">
    <property type="protein sequence ID" value="AAH92530.1"/>
    <property type="molecule type" value="mRNA"/>
</dbReference>
<dbReference type="EMBL" id="BC125431">
    <property type="protein sequence ID" value="AAI25432.1"/>
    <property type="molecule type" value="mRNA"/>
</dbReference>
<dbReference type="EMBL" id="BC125433">
    <property type="protein sequence ID" value="AAI25434.1"/>
    <property type="molecule type" value="mRNA"/>
</dbReference>
<dbReference type="CCDS" id="CCDS40459.1">
    <molecule id="Q562E2-2"/>
</dbReference>
<dbReference type="CCDS" id="CCDS80922.1">
    <molecule id="Q562E2-1"/>
</dbReference>
<dbReference type="RefSeq" id="NP_001288102.1">
    <molecule id="Q562E2-1"/>
    <property type="nucleotide sequence ID" value="NM_001301173.1"/>
</dbReference>
<dbReference type="RefSeq" id="NP_808459.1">
    <molecule id="Q562E2-2"/>
    <property type="nucleotide sequence ID" value="NM_177791.3"/>
</dbReference>
<dbReference type="SMR" id="Q562E2"/>
<dbReference type="BioGRID" id="235004">
    <property type="interactions" value="1"/>
</dbReference>
<dbReference type="CORUM" id="Q562E2"/>
<dbReference type="FunCoup" id="Q562E2">
    <property type="interactions" value="7"/>
</dbReference>
<dbReference type="STRING" id="10090.ENSMUSP00000050687"/>
<dbReference type="iPTMnet" id="Q562E2"/>
<dbReference type="PhosphoSitePlus" id="Q562E2"/>
<dbReference type="SwissPalm" id="Q562E2"/>
<dbReference type="jPOST" id="Q562E2"/>
<dbReference type="PaxDb" id="10090-ENSMUSP00000050687"/>
<dbReference type="ProteomicsDB" id="301760">
    <molecule id="Q562E2-1"/>
</dbReference>
<dbReference type="ProteomicsDB" id="301761">
    <molecule id="Q562E2-2"/>
</dbReference>
<dbReference type="Antibodypedia" id="56054">
    <property type="antibodies" value="102 antibodies from 18 providers"/>
</dbReference>
<dbReference type="Ensembl" id="ENSMUST00000063071.13">
    <molecule id="Q562E2-2"/>
    <property type="protein sequence ID" value="ENSMUSP00000050687.7"/>
    <property type="gene ID" value="ENSMUSG00000051648.14"/>
</dbReference>
<dbReference type="Ensembl" id="ENSMUST00000167294.8">
    <molecule id="Q562E2-1"/>
    <property type="protein sequence ID" value="ENSMUSP00000130831.2"/>
    <property type="gene ID" value="ENSMUSG00000051648.14"/>
</dbReference>
<dbReference type="GeneID" id="279499"/>
<dbReference type="KEGG" id="mmu:279499"/>
<dbReference type="UCSC" id="uc009ncy.2">
    <molecule id="Q562E2-2"/>
    <property type="organism name" value="mouse"/>
</dbReference>
<dbReference type="UCSC" id="uc009ncz.2">
    <molecule id="Q562E2-1"/>
    <property type="organism name" value="mouse"/>
</dbReference>
<dbReference type="AGR" id="MGI:3045294"/>
<dbReference type="CTD" id="146212"/>
<dbReference type="MGI" id="MGI:3045294">
    <property type="gene designation" value="Kctd19"/>
</dbReference>
<dbReference type="VEuPathDB" id="HostDB:ENSMUSG00000051648"/>
<dbReference type="eggNOG" id="KOG0342">
    <property type="taxonomic scope" value="Eukaryota"/>
</dbReference>
<dbReference type="eggNOG" id="KOG2723">
    <property type="taxonomic scope" value="Eukaryota"/>
</dbReference>
<dbReference type="GeneTree" id="ENSGT00390000007606"/>
<dbReference type="HOGENOM" id="CLU_014244_0_0_1"/>
<dbReference type="InParanoid" id="Q562E2"/>
<dbReference type="OMA" id="EEMFYAR"/>
<dbReference type="PhylomeDB" id="Q562E2"/>
<dbReference type="TreeFam" id="TF315332"/>
<dbReference type="BioGRID-ORCS" id="279499">
    <property type="hits" value="1 hit in 78 CRISPR screens"/>
</dbReference>
<dbReference type="ChiTaRS" id="Kctd19">
    <property type="organism name" value="mouse"/>
</dbReference>
<dbReference type="PRO" id="PR:Q562E2"/>
<dbReference type="Proteomes" id="UP000000589">
    <property type="component" value="Chromosome 8"/>
</dbReference>
<dbReference type="RNAct" id="Q562E2">
    <property type="molecule type" value="protein"/>
</dbReference>
<dbReference type="Bgee" id="ENSMUSG00000051648">
    <property type="expression patterns" value="Expressed in spermatocyte and 19 other cell types or tissues"/>
</dbReference>
<dbReference type="ExpressionAtlas" id="Q562E2">
    <property type="expression patterns" value="baseline and differential"/>
</dbReference>
<dbReference type="GO" id="GO:0005634">
    <property type="term" value="C:nucleus"/>
    <property type="evidence" value="ECO:0000314"/>
    <property type="project" value="UniProtKB"/>
</dbReference>
<dbReference type="GO" id="GO:0007140">
    <property type="term" value="P:male meiotic nuclear division"/>
    <property type="evidence" value="ECO:0000315"/>
    <property type="project" value="UniProtKB"/>
</dbReference>
<dbReference type="GO" id="GO:0051260">
    <property type="term" value="P:protein homooligomerization"/>
    <property type="evidence" value="ECO:0007669"/>
    <property type="project" value="InterPro"/>
</dbReference>
<dbReference type="CDD" id="cd18373">
    <property type="entry name" value="BTB1_POZ_KCTD19"/>
    <property type="match status" value="1"/>
</dbReference>
<dbReference type="CDD" id="cd18374">
    <property type="entry name" value="BTB2_POZ_KCTD19"/>
    <property type="match status" value="1"/>
</dbReference>
<dbReference type="Gene3D" id="3.30.710.10">
    <property type="entry name" value="Potassium Channel Kv1.1, Chain A"/>
    <property type="match status" value="3"/>
</dbReference>
<dbReference type="InterPro" id="IPR011333">
    <property type="entry name" value="SKP1/BTB/POZ_sf"/>
</dbReference>
<dbReference type="InterPro" id="IPR003131">
    <property type="entry name" value="T1-type_BTB"/>
</dbReference>
<dbReference type="PANTHER" id="PTHR14499:SF20">
    <property type="entry name" value="BTB_POZ DOMAIN-CONTAINING PROTEIN KCTD19"/>
    <property type="match status" value="1"/>
</dbReference>
<dbReference type="PANTHER" id="PTHR14499">
    <property type="entry name" value="POTASSIUM CHANNEL TETRAMERIZATION DOMAIN-CONTAINING"/>
    <property type="match status" value="1"/>
</dbReference>
<dbReference type="Pfam" id="PF02214">
    <property type="entry name" value="BTB_2"/>
    <property type="match status" value="1"/>
</dbReference>
<dbReference type="SUPFAM" id="SSF54695">
    <property type="entry name" value="POZ domain"/>
    <property type="match status" value="3"/>
</dbReference>
<feature type="chain" id="PRO_0000313588" description="BTB/POZ domain-containing protein KCTD19">
    <location>
        <begin position="1"/>
        <end position="927"/>
    </location>
</feature>
<feature type="domain" description="BTB 1">
    <location>
        <begin position="18"/>
        <end position="72"/>
    </location>
</feature>
<feature type="domain" description="BTB 2">
    <location>
        <begin position="399"/>
        <end position="486"/>
    </location>
</feature>
<feature type="region of interest" description="Disordered" evidence="1">
    <location>
        <begin position="664"/>
        <end position="760"/>
    </location>
</feature>
<feature type="compositionally biased region" description="Basic and acidic residues" evidence="1">
    <location>
        <begin position="731"/>
        <end position="743"/>
    </location>
</feature>
<feature type="modified residue" description="Phosphoserine" evidence="9">
    <location>
        <position position="270"/>
    </location>
</feature>
<feature type="splice variant" id="VSP_030044" description="In isoform 2." evidence="6 7">
    <original>M</original>
    <variation>MALQPALPGPKGSQLSLEQEEPSL</variation>
    <location>
        <position position="258"/>
    </location>
</feature>
<feature type="sequence conflict" description="In Ref. 2; AAH92530." evidence="8" ref="2">
    <original>L</original>
    <variation>V</variation>
    <location>
        <position position="906"/>
    </location>
</feature>
<accession>Q562E2</accession>
<accession>Q8C628</accession>
<protein>
    <recommendedName>
        <fullName>BTB/POZ domain-containing protein KCTD19</fullName>
    </recommendedName>
</protein>
<evidence type="ECO:0000256" key="1">
    <source>
        <dbReference type="SAM" id="MobiDB-lite"/>
    </source>
</evidence>
<evidence type="ECO:0000269" key="2">
    <source>
    </source>
</evidence>
<evidence type="ECO:0000269" key="3">
    <source>
    </source>
</evidence>
<evidence type="ECO:0000269" key="4">
    <source>
    </source>
</evidence>
<evidence type="ECO:0000269" key="5">
    <source>
    </source>
</evidence>
<evidence type="ECO:0000303" key="6">
    <source>
    </source>
</evidence>
<evidence type="ECO:0000303" key="7">
    <source>
    </source>
</evidence>
<evidence type="ECO:0000305" key="8"/>
<evidence type="ECO:0007744" key="9">
    <source>
    </source>
</evidence>
<keyword id="KW-0010">Activator</keyword>
<keyword id="KW-0025">Alternative splicing</keyword>
<keyword id="KW-0469">Meiosis</keyword>
<keyword id="KW-0539">Nucleus</keyword>
<keyword id="KW-0597">Phosphoprotein</keyword>
<keyword id="KW-1185">Reference proteome</keyword>
<keyword id="KW-0677">Repeat</keyword>
<keyword id="KW-0804">Transcription</keyword>
<keyword id="KW-0805">Transcription regulation</keyword>
<comment type="function">
    <text evidence="3 4 5">Transcription regulator which is essential for male fertility and for the completion of meiotic prophase in spermatocytes (PubMed:33961623, PubMed:34075040, PubMed:35341968). Regulates progression of the pachytene stage of meiotic prophase and promotes the transcriptional activation activity ZNF541 (PubMed:35341968). Required for the organization of chromosomes during metaphase I (PubMed:33961623, PubMed:34075040).</text>
</comment>
<comment type="subunit">
    <text evidence="2 3 4 5">Identified in a complex with ZNF541, HDAC1 and HSPA2 (PubMed:18849567). Identified in a complex with ZNF541 and HDAC1 (PubMed:33961623). Identified in a complex with HDAC1, HDAC2, DNTTIP1 and ZNF541 (PubMed:34075040, PubMed:35341968).</text>
</comment>
<comment type="subcellular location">
    <subcellularLocation>
        <location evidence="3 4">Nucleus</location>
    </subcellularLocation>
</comment>
<comment type="alternative products">
    <event type="alternative splicing"/>
    <isoform>
        <id>Q562E2-1</id>
        <name>1</name>
        <sequence type="displayed"/>
    </isoform>
    <isoform>
        <id>Q562E2-2</id>
        <name>2</name>
        <sequence type="described" ref="VSP_030044"/>
    </isoform>
</comment>
<comment type="tissue specificity">
    <text evidence="2 3 4">Detected in adult testis.</text>
</comment>
<comment type="developmental stage">
    <text evidence="2">Not detected in testis from neonates. Expression in testis is first detected 14 days after birth and increases thereafter. Highly expressed 30 and 84 days after birth.</text>
</comment>
<comment type="disruption phenotype">
    <text evidence="3 4">Males are infertile and spermatocytes fail to complete meiosis and show defects in metaphase I organization.</text>
</comment>